<organismHost>
    <name type="scientific">Gallus gallus</name>
    <name type="common">Chicken</name>
    <dbReference type="NCBI Taxonomy" id="9031"/>
</organismHost>
<organismHost>
    <name type="scientific">Meleagris gallopavo</name>
    <name type="common">Wild turkey</name>
    <dbReference type="NCBI Taxonomy" id="9103"/>
</organismHost>
<protein>
    <recommendedName>
        <fullName>Non-structural polyprotein 1AB</fullName>
    </recommendedName>
    <component>
        <recommendedName>
            <fullName>Protein p19</fullName>
        </recommendedName>
    </component>
    <component>
        <recommendedName>
            <fullName>Transmembrane protein 1A</fullName>
        </recommendedName>
    </component>
    <component>
        <recommendedName>
            <fullName>Serine protease p27</fullName>
            <shortName>p27</shortName>
            <ecNumber evidence="2">3.4.21.-</ecNumber>
        </recommendedName>
    </component>
    <component>
        <recommendedName>
            <fullName>Viral genome-linked protein</fullName>
        </recommendedName>
        <alternativeName>
            <fullName>VPg</fullName>
        </alternativeName>
    </component>
    <component>
        <recommendedName>
            <fullName>Protein p20</fullName>
        </recommendedName>
    </component>
    <component>
        <recommendedName>
            <fullName>RNA-directed RNA polymerase p57</fullName>
            <shortName>p57</shortName>
            <ecNumber>2.7.7.48</ecNumber>
        </recommendedName>
    </component>
</protein>
<organism>
    <name type="scientific">Avian nephritis virus 1</name>
    <name type="common">ANV-1</name>
    <dbReference type="NCBI Taxonomy" id="336960"/>
    <lineage>
        <taxon>Viruses</taxon>
        <taxon>Riboviria</taxon>
        <taxon>Orthornavirae</taxon>
        <taxon>Pisuviricota</taxon>
        <taxon>Stelpaviricetes</taxon>
        <taxon>Stellavirales</taxon>
        <taxon>Astroviridae</taxon>
        <taxon>Avastrovirus</taxon>
        <taxon>Avastrovirus 2</taxon>
    </lineage>
</organism>
<feature type="chain" id="PRO_0000327319" description="Non-structural polyprotein 1AB">
    <location>
        <begin position="1"/>
        <end position="1512"/>
    </location>
</feature>
<feature type="chain" id="PRO_0000327320" description="Protein p19" evidence="4">
    <location>
        <begin position="1"/>
        <end position="204"/>
    </location>
</feature>
<feature type="chain" id="PRO_0000327321" description="Transmembrane protein 1A" evidence="4">
    <location>
        <begin position="205"/>
        <end position="478"/>
    </location>
</feature>
<feature type="chain" id="PRO_0000327322" description="Serine protease p27" evidence="4">
    <location>
        <begin position="479"/>
        <end position="730"/>
    </location>
</feature>
<feature type="chain" id="PRO_0000419594" description="Viral genome-linked protein" evidence="4">
    <location>
        <begin position="718"/>
        <end position="809"/>
    </location>
</feature>
<feature type="chain" id="PRO_0000327323" description="Protein p20" evidence="4">
    <location>
        <begin position="810"/>
        <end position="954"/>
    </location>
</feature>
<feature type="chain" id="PRO_0000327324" description="RNA-directed RNA polymerase p57" evidence="4">
    <location>
        <begin position="955"/>
        <end position="1512"/>
    </location>
</feature>
<feature type="transmembrane region" description="Helical" evidence="4">
    <location>
        <begin position="190"/>
        <end position="210"/>
    </location>
</feature>
<feature type="transmembrane region" description="Helical" evidence="4">
    <location>
        <begin position="295"/>
        <end position="315"/>
    </location>
</feature>
<feature type="transmembrane region" description="Helical" evidence="4">
    <location>
        <begin position="323"/>
        <end position="343"/>
    </location>
</feature>
<feature type="transmembrane region" description="Helical" evidence="4">
    <location>
        <begin position="360"/>
        <end position="380"/>
    </location>
</feature>
<feature type="transmembrane region" description="Helical" evidence="4">
    <location>
        <begin position="399"/>
        <end position="419"/>
    </location>
</feature>
<feature type="domain" description="RdRp catalytic" evidence="5">
    <location>
        <begin position="1257"/>
        <end position="1390"/>
    </location>
</feature>
<feature type="region of interest" description="Disordered" evidence="6">
    <location>
        <begin position="940"/>
        <end position="981"/>
    </location>
</feature>
<feature type="compositionally biased region" description="Low complexity" evidence="6">
    <location>
        <begin position="941"/>
        <end position="961"/>
    </location>
</feature>
<feature type="active site" description="Charge relay system; for serine protease activity" evidence="1">
    <location>
        <position position="524"/>
    </location>
</feature>
<feature type="active site" description="Charge relay system; for serine protease activity" evidence="1">
    <location>
        <position position="556"/>
    </location>
</feature>
<feature type="active site" description="Charge relay system; for serine protease activity" evidence="1">
    <location>
        <position position="621"/>
    </location>
</feature>
<feature type="site" description="Cleavage" evidence="4">
    <location>
        <begin position="204"/>
        <end position="205"/>
    </location>
</feature>
<feature type="site" description="Cleavage" evidence="4">
    <location>
        <begin position="478"/>
        <end position="479"/>
    </location>
</feature>
<feature type="site" description="Cleavage" evidence="2">
    <location>
        <begin position="717"/>
        <end position="718"/>
    </location>
</feature>
<feature type="site" description="Cleavage" evidence="4">
    <location>
        <begin position="730"/>
        <end position="731"/>
    </location>
</feature>
<feature type="site" description="Cleavage" evidence="4">
    <location>
        <begin position="809"/>
        <end position="810"/>
    </location>
</feature>
<feature type="site" description="Cleavage" evidence="4">
    <location>
        <begin position="954"/>
        <end position="955"/>
    </location>
</feature>
<feature type="modified residue" description="O-(5'-phospho-RNA)-tyrosine" evidence="3">
    <location>
        <position position="753"/>
    </location>
</feature>
<name>NS1AB_ANV1</name>
<dbReference type="EC" id="3.4.21.-" evidence="2"/>
<dbReference type="EC" id="2.7.7.48"/>
<dbReference type="EMBL" id="AB033998">
    <property type="protein sequence ID" value="BAA92848.1"/>
    <property type="status" value="ALT_SEQ"/>
    <property type="molecule type" value="Genomic_RNA"/>
</dbReference>
<dbReference type="SMR" id="Q9JGF2"/>
<dbReference type="KEGG" id="vg:1732632"/>
<dbReference type="Proteomes" id="UP000007440">
    <property type="component" value="Segment"/>
</dbReference>
<dbReference type="GO" id="GO:0033644">
    <property type="term" value="C:host cell membrane"/>
    <property type="evidence" value="ECO:0007669"/>
    <property type="project" value="UniProtKB-SubCell"/>
</dbReference>
<dbReference type="GO" id="GO:0016020">
    <property type="term" value="C:membrane"/>
    <property type="evidence" value="ECO:0007669"/>
    <property type="project" value="UniProtKB-KW"/>
</dbReference>
<dbReference type="GO" id="GO:0005524">
    <property type="term" value="F:ATP binding"/>
    <property type="evidence" value="ECO:0007669"/>
    <property type="project" value="UniProtKB-KW"/>
</dbReference>
<dbReference type="GO" id="GO:0003723">
    <property type="term" value="F:RNA binding"/>
    <property type="evidence" value="ECO:0007669"/>
    <property type="project" value="InterPro"/>
</dbReference>
<dbReference type="GO" id="GO:0003968">
    <property type="term" value="F:RNA-directed RNA polymerase activity"/>
    <property type="evidence" value="ECO:0007669"/>
    <property type="project" value="UniProtKB-KW"/>
</dbReference>
<dbReference type="GO" id="GO:0008236">
    <property type="term" value="F:serine-type peptidase activity"/>
    <property type="evidence" value="ECO:0007669"/>
    <property type="project" value="UniProtKB-KW"/>
</dbReference>
<dbReference type="GO" id="GO:0006351">
    <property type="term" value="P:DNA-templated transcription"/>
    <property type="evidence" value="ECO:0007669"/>
    <property type="project" value="InterPro"/>
</dbReference>
<dbReference type="GO" id="GO:0006508">
    <property type="term" value="P:proteolysis"/>
    <property type="evidence" value="ECO:0007669"/>
    <property type="project" value="UniProtKB-KW"/>
</dbReference>
<dbReference type="GO" id="GO:0039694">
    <property type="term" value="P:viral RNA genome replication"/>
    <property type="evidence" value="ECO:0007669"/>
    <property type="project" value="InterPro"/>
</dbReference>
<dbReference type="GO" id="GO:0075523">
    <property type="term" value="P:viral translational frameshifting"/>
    <property type="evidence" value="ECO:0007669"/>
    <property type="project" value="UniProtKB-KW"/>
</dbReference>
<dbReference type="CDD" id="cd23172">
    <property type="entry name" value="ps-ssRNAv_Astroviridae_RdRp"/>
    <property type="match status" value="1"/>
</dbReference>
<dbReference type="Gene3D" id="3.30.70.270">
    <property type="match status" value="1"/>
</dbReference>
<dbReference type="Gene3D" id="2.40.10.10">
    <property type="entry name" value="Trypsin-like serine proteases"/>
    <property type="match status" value="2"/>
</dbReference>
<dbReference type="InterPro" id="IPR045836">
    <property type="entry name" value="Astro_VPg"/>
</dbReference>
<dbReference type="InterPro" id="IPR043502">
    <property type="entry name" value="DNA/RNA_pol_sf"/>
</dbReference>
<dbReference type="InterPro" id="IPR009003">
    <property type="entry name" value="Peptidase_S1_PA"/>
</dbReference>
<dbReference type="InterPro" id="IPR043504">
    <property type="entry name" value="Peptidase_S1_PA_chymotrypsin"/>
</dbReference>
<dbReference type="InterPro" id="IPR043128">
    <property type="entry name" value="Rev_trsase/Diguanyl_cyclase"/>
</dbReference>
<dbReference type="InterPro" id="IPR001205">
    <property type="entry name" value="RNA-dir_pol_C"/>
</dbReference>
<dbReference type="InterPro" id="IPR007094">
    <property type="entry name" value="RNA-dir_pol_PSvirus"/>
</dbReference>
<dbReference type="Pfam" id="PF19416">
    <property type="entry name" value="Astro_VPg"/>
    <property type="match status" value="1"/>
</dbReference>
<dbReference type="Pfam" id="PF00680">
    <property type="entry name" value="RdRP_1"/>
    <property type="match status" value="1"/>
</dbReference>
<dbReference type="SUPFAM" id="SSF56672">
    <property type="entry name" value="DNA/RNA polymerases"/>
    <property type="match status" value="1"/>
</dbReference>
<dbReference type="SUPFAM" id="SSF50494">
    <property type="entry name" value="Trypsin-like serine proteases"/>
    <property type="match status" value="1"/>
</dbReference>
<dbReference type="PROSITE" id="PS50507">
    <property type="entry name" value="RDRP_SSRNA_POS"/>
    <property type="match status" value="1"/>
</dbReference>
<keyword id="KW-0067">ATP-binding</keyword>
<keyword id="KW-0191">Covalent protein-RNA linkage</keyword>
<keyword id="KW-1043">Host membrane</keyword>
<keyword id="KW-0378">Hydrolase</keyword>
<keyword id="KW-0472">Membrane</keyword>
<keyword id="KW-0547">Nucleotide-binding</keyword>
<keyword id="KW-0548">Nucleotidyltransferase</keyword>
<keyword id="KW-0597">Phosphoprotein</keyword>
<keyword id="KW-0645">Protease</keyword>
<keyword id="KW-0688">Ribosomal frameshifting</keyword>
<keyword id="KW-0696">RNA-directed RNA polymerase</keyword>
<keyword id="KW-0720">Serine protease</keyword>
<keyword id="KW-0808">Transferase</keyword>
<keyword id="KW-0812">Transmembrane</keyword>
<keyword id="KW-1133">Transmembrane helix</keyword>
<keyword id="KW-0693">Viral RNA replication</keyword>
<gene>
    <name type="primary">ORF1</name>
</gene>
<proteinExistence type="inferred from homology"/>
<reference key="1">
    <citation type="journal article" date="2000" name="J. Virol.">
        <title>Avian nephritis virus (ANV) as a new member of the family Astroviridae and construction of infectious ANV cDNA.</title>
        <authorList>
            <person name="Imada T."/>
            <person name="Yamaguchi S."/>
            <person name="Mase M."/>
            <person name="Tsukamoto K."/>
            <person name="Kubo M."/>
            <person name="Morooka A."/>
        </authorList>
    </citation>
    <scope>NUCLEOTIDE SEQUENCE [GENOMIC RNA]</scope>
    <source>
        <strain>G-4260</strain>
    </source>
</reference>
<evidence type="ECO:0000250" key="1"/>
<evidence type="ECO:0000250" key="2">
    <source>
        <dbReference type="UniProtKB" id="P0C6K4"/>
    </source>
</evidence>
<evidence type="ECO:0000250" key="3">
    <source>
        <dbReference type="UniProtKB" id="Q3ZN07"/>
    </source>
</evidence>
<evidence type="ECO:0000255" key="4"/>
<evidence type="ECO:0000255" key="5">
    <source>
        <dbReference type="PROSITE-ProRule" id="PRU00539"/>
    </source>
</evidence>
<evidence type="ECO:0000256" key="6">
    <source>
        <dbReference type="SAM" id="MobiDB-lite"/>
    </source>
</evidence>
<evidence type="ECO:0000305" key="7"/>
<accession>Q9JGF2</accession>
<sequence>MASAGPTGAGARPPKAFTAQAGLAKLVNPAGLNSILARGKEKFGGTQAWKELMGCDVIFARSISHWYGIKGTTYYELTVALGQPLYKPVTDPELTEEEKAVMTAVQSRFAQSNSSVVLTRTLLNKTCELKDRIRELTDELGQTEVHLAREKVKAAALKLENRKLFVENQELKDQLEKERTKHGWKGLKTLCLWIFLATLIGGYITGSNAACTLVDVPSPMKVGYDTFKQMCIHKDSYLPDGAFDKESLALECSKQMDYMDCKEVITDSISGKTSFAGMLRDVFRVDEIVTAIRTVVRFAMDFSLAYPICVMFVLILTRNKKHAIISACCALVAKCCGLRLLPFTLVLTYAPSETAIAGCIYGLGYISIPLVTFLHWVGLVLKAILVPDDCYIGTRVSHALAWSIMLPMWIITQELMAFTEFPLELQIVTTVVVCTAGFGFRYLTGTVTITEPDGTVKKYKRIFNAKSAIGTISTVFFEKAKAIRGVIPSFPSKADNIVKIEVDVDGGSAGVGFRLGNYIYTAGHVVGEAKIAKITWKGLTSQAKVLGHIELPLFTDTLARLEIPKPFQQLPVFRLAKSSENDYVQMVCFDNQLQNVVTFSGWANIDGDYLNAPFETYAGTSGSPIINRDGRMLGVHFGSNAVVSQGFVITRLFATEPAVKQCKSDEDLADEIVRKVMGGIRISFASLTSELEKQRDELNALKQMVNDLIDTDLVALEKKKGKTKRTVRGQKHKTKAISKAAFMKTKVLTEEEYRRLEEEGFTKDEIKDIVDNLREQAWLDYQNQLDEEGDDDWYEQMEEDQRINDQIDQNIERDLEDRGEWYGQRKITFKQRAMLRFIQLGRQQQVATVSFPDGYEDRAEELYNKVVTTEDLPEGETSEAALSLPNKIVHQAGKRLNFKHVKIHPDKTFMKSGVTQIEEKPEGDIILKAKTTTLAPKEEPVIQQVEQQPQVEQQQQPQQPVVEEKKRTPPPKPQRKPKTGAKAKCLDCGETFVERQDFHVCKSKKLNEPPSGGYTPVPDHLRWNNWQIYMEPLDLRITVPENYPILGHIAIDKLVERKKKVNDPLLKMLEQPKCEGFTSTTWTRKAYTKSFEKFDYGDAVDFVQDYPELTAFADAAVLAEVGYMEGTHVIPIQETSKNMDSTPAFPKMLDFDSERDYLEAHGMKEYIDTQLGVQSGKPLWWCFLKNEILKEKKVSEDDIRIITCSDPVITRLGASFDSEQNERMKERTETHHAQVGWTPFFGGLDKRVRRITSCGRTQVLELDWTRFDGTIPVQLFQRMRELRKFFLTRRSRRRYGKLLDWYNAQLTDRITLLPTGEVTHVKKGNPSGQFSTTVDNNLVNEWLTAFEFGYQHLENHGIIPTVRDYRANVDFLCYGDDRLLAFNPSFVNYDPQVTIDMYKNIFGMWVKPENIKLFDSPTGSSFCGFTLVKPHGQWVGVVNVNKLLQSLKTPTRRLPDLESLWGKLVSLKIMCYHSDPEAVSYLSNQIRRVEEYARAEGIELPEVGPDFYRKIW</sequence>
<comment type="function">
    <molecule>Serine protease p27</molecule>
    <text evidence="2">Responsible for the cleavage of the polyprotein into functional products.</text>
</comment>
<comment type="function">
    <molecule>Viral genome-linked protein</molecule>
    <text evidence="3">Protein covalently attached to the 5' extremity of the genomic and subgenomic RNAs (By similarity). It may serve as a primer for the replicase (By similarity).</text>
</comment>
<comment type="catalytic activity">
    <reaction evidence="5">
        <text>RNA(n) + a ribonucleoside 5'-triphosphate = RNA(n+1) + diphosphate</text>
        <dbReference type="Rhea" id="RHEA:21248"/>
        <dbReference type="Rhea" id="RHEA-COMP:14527"/>
        <dbReference type="Rhea" id="RHEA-COMP:17342"/>
        <dbReference type="ChEBI" id="CHEBI:33019"/>
        <dbReference type="ChEBI" id="CHEBI:61557"/>
        <dbReference type="ChEBI" id="CHEBI:140395"/>
        <dbReference type="EC" id="2.7.7.48"/>
    </reaction>
</comment>
<comment type="subunit">
    <molecule>Serine protease p27</molecule>
    <text evidence="2">Monomer.</text>
</comment>
<comment type="subcellular location">
    <molecule>Transmembrane protein 1A</molecule>
    <subcellularLocation>
        <location evidence="7">Host membrane</location>
        <topology evidence="7">Multi-pass membrane protein</topology>
    </subcellularLocation>
</comment>
<comment type="alternative products">
    <event type="ribosomal frameshifting"/>
    <isoform>
        <id>Q9JGF2-1</id>
        <name>nsp1ab</name>
        <sequence type="displayed"/>
    </isoform>
    <isoform>
        <id>P0C6K7-1</id>
        <name>nsp1a</name>
        <sequence type="external"/>
    </isoform>
</comment>
<comment type="PTM">
    <text evidence="2">Cleaved by the viral and host proteases (By similarity). The protease is probably autocatalytically cleaved (By similarity).</text>
</comment>
<comment type="miscellaneous">
    <molecule>Isoform nsp1ab</molecule>
    <text>Generated by a ribosomal frameshift at position 1005.</text>
</comment>
<comment type="similarity">
    <text evidence="7">Belongs to the astroviridae polyprotein 1AB family.</text>
</comment>